<organism>
    <name type="scientific">Exiguobacterium sp. (strain ATCC BAA-1283 / AT1b)</name>
    <dbReference type="NCBI Taxonomy" id="360911"/>
    <lineage>
        <taxon>Bacteria</taxon>
        <taxon>Bacillati</taxon>
        <taxon>Bacillota</taxon>
        <taxon>Bacilli</taxon>
        <taxon>Bacillales</taxon>
        <taxon>Bacillales Family XII. Incertae Sedis</taxon>
        <taxon>Exiguobacterium</taxon>
    </lineage>
</organism>
<dbReference type="EMBL" id="CP001615">
    <property type="protein sequence ID" value="ACQ70560.1"/>
    <property type="molecule type" value="Genomic_DNA"/>
</dbReference>
<dbReference type="RefSeq" id="WP_012727678.1">
    <property type="nucleotide sequence ID" value="NC_012673.1"/>
</dbReference>
<dbReference type="SMR" id="C4KZP7"/>
<dbReference type="STRING" id="360911.EAT1b_1634"/>
<dbReference type="KEGG" id="eat:EAT1b_1634"/>
<dbReference type="eggNOG" id="COG0051">
    <property type="taxonomic scope" value="Bacteria"/>
</dbReference>
<dbReference type="HOGENOM" id="CLU_122625_1_3_9"/>
<dbReference type="OrthoDB" id="9804464at2"/>
<dbReference type="Proteomes" id="UP000000716">
    <property type="component" value="Chromosome"/>
</dbReference>
<dbReference type="GO" id="GO:1990904">
    <property type="term" value="C:ribonucleoprotein complex"/>
    <property type="evidence" value="ECO:0007669"/>
    <property type="project" value="UniProtKB-KW"/>
</dbReference>
<dbReference type="GO" id="GO:0005840">
    <property type="term" value="C:ribosome"/>
    <property type="evidence" value="ECO:0007669"/>
    <property type="project" value="UniProtKB-KW"/>
</dbReference>
<dbReference type="GO" id="GO:0003735">
    <property type="term" value="F:structural constituent of ribosome"/>
    <property type="evidence" value="ECO:0007669"/>
    <property type="project" value="InterPro"/>
</dbReference>
<dbReference type="GO" id="GO:0000049">
    <property type="term" value="F:tRNA binding"/>
    <property type="evidence" value="ECO:0007669"/>
    <property type="project" value="UniProtKB-UniRule"/>
</dbReference>
<dbReference type="GO" id="GO:0006412">
    <property type="term" value="P:translation"/>
    <property type="evidence" value="ECO:0007669"/>
    <property type="project" value="UniProtKB-UniRule"/>
</dbReference>
<dbReference type="FunFam" id="3.30.70.600:FF:000001">
    <property type="entry name" value="30S ribosomal protein S10"/>
    <property type="match status" value="1"/>
</dbReference>
<dbReference type="Gene3D" id="3.30.70.600">
    <property type="entry name" value="Ribosomal protein S10 domain"/>
    <property type="match status" value="1"/>
</dbReference>
<dbReference type="HAMAP" id="MF_00508">
    <property type="entry name" value="Ribosomal_uS10"/>
    <property type="match status" value="1"/>
</dbReference>
<dbReference type="InterPro" id="IPR001848">
    <property type="entry name" value="Ribosomal_uS10"/>
</dbReference>
<dbReference type="InterPro" id="IPR018268">
    <property type="entry name" value="Ribosomal_uS10_CS"/>
</dbReference>
<dbReference type="InterPro" id="IPR027486">
    <property type="entry name" value="Ribosomal_uS10_dom"/>
</dbReference>
<dbReference type="InterPro" id="IPR036838">
    <property type="entry name" value="Ribosomal_uS10_dom_sf"/>
</dbReference>
<dbReference type="NCBIfam" id="NF001861">
    <property type="entry name" value="PRK00596.1"/>
    <property type="match status" value="1"/>
</dbReference>
<dbReference type="NCBIfam" id="TIGR01049">
    <property type="entry name" value="rpsJ_bact"/>
    <property type="match status" value="1"/>
</dbReference>
<dbReference type="PANTHER" id="PTHR11700">
    <property type="entry name" value="30S RIBOSOMAL PROTEIN S10 FAMILY MEMBER"/>
    <property type="match status" value="1"/>
</dbReference>
<dbReference type="Pfam" id="PF00338">
    <property type="entry name" value="Ribosomal_S10"/>
    <property type="match status" value="1"/>
</dbReference>
<dbReference type="PRINTS" id="PR00971">
    <property type="entry name" value="RIBOSOMALS10"/>
</dbReference>
<dbReference type="SMART" id="SM01403">
    <property type="entry name" value="Ribosomal_S10"/>
    <property type="match status" value="1"/>
</dbReference>
<dbReference type="SUPFAM" id="SSF54999">
    <property type="entry name" value="Ribosomal protein S10"/>
    <property type="match status" value="1"/>
</dbReference>
<dbReference type="PROSITE" id="PS00361">
    <property type="entry name" value="RIBOSOMAL_S10"/>
    <property type="match status" value="1"/>
</dbReference>
<protein>
    <recommendedName>
        <fullName evidence="1">Small ribosomal subunit protein uS10</fullName>
    </recommendedName>
    <alternativeName>
        <fullName evidence="2">30S ribosomal protein S10</fullName>
    </alternativeName>
</protein>
<reference key="1">
    <citation type="journal article" date="2011" name="J. Bacteriol.">
        <title>Complete genome sequence of the Thermophilic Bacterium Exiguobacterium sp. AT1b.</title>
        <authorList>
            <person name="Vishnivetskaya T.A."/>
            <person name="Lucas S."/>
            <person name="Copeland A."/>
            <person name="Lapidus A."/>
            <person name="Glavina del Rio T."/>
            <person name="Dalin E."/>
            <person name="Tice H."/>
            <person name="Bruce D.C."/>
            <person name="Goodwin L.A."/>
            <person name="Pitluck S."/>
            <person name="Saunders E."/>
            <person name="Brettin T."/>
            <person name="Detter C."/>
            <person name="Han C."/>
            <person name="Larimer F."/>
            <person name="Land M.L."/>
            <person name="Hauser L.J."/>
            <person name="Kyrpides N.C."/>
            <person name="Ovchinnikova G."/>
            <person name="Kathariou S."/>
            <person name="Ramaley R.F."/>
            <person name="Rodrigues D.F."/>
            <person name="Hendrix C."/>
            <person name="Richardson P."/>
            <person name="Tiedje J.M."/>
        </authorList>
    </citation>
    <scope>NUCLEOTIDE SEQUENCE [LARGE SCALE GENOMIC DNA]</scope>
    <source>
        <strain>ATCC BAA-1283 / AT1b</strain>
    </source>
</reference>
<proteinExistence type="inferred from homology"/>
<sequence length="102" mass="11678">MANEKIRIRLKAYDHRVLDQSAEKIVDTAKRSGAKVSGPIPLPTEKSIYTILRAVHKYKDAREQFEMRTHKRLIDIVNPTPKTVDALMRLELPSGVDIEIKL</sequence>
<comment type="function">
    <text evidence="1">Involved in the binding of tRNA to the ribosomes.</text>
</comment>
<comment type="subunit">
    <text evidence="1">Part of the 30S ribosomal subunit.</text>
</comment>
<comment type="similarity">
    <text evidence="1">Belongs to the universal ribosomal protein uS10 family.</text>
</comment>
<gene>
    <name evidence="1" type="primary">rpsJ</name>
    <name type="ordered locus">EAT1b_1634</name>
</gene>
<accession>C4KZP7</accession>
<feature type="chain" id="PRO_1000206586" description="Small ribosomal subunit protein uS10">
    <location>
        <begin position="1"/>
        <end position="102"/>
    </location>
</feature>
<keyword id="KW-0687">Ribonucleoprotein</keyword>
<keyword id="KW-0689">Ribosomal protein</keyword>
<evidence type="ECO:0000255" key="1">
    <source>
        <dbReference type="HAMAP-Rule" id="MF_00508"/>
    </source>
</evidence>
<evidence type="ECO:0000305" key="2"/>
<name>RS10_EXISA</name>